<organism>
    <name type="scientific">Vibrio atlanticus (strain LGP32)</name>
    <name type="common">Vibrio splendidus (strain Mel32)</name>
    <dbReference type="NCBI Taxonomy" id="575788"/>
    <lineage>
        <taxon>Bacteria</taxon>
        <taxon>Pseudomonadati</taxon>
        <taxon>Pseudomonadota</taxon>
        <taxon>Gammaproteobacteria</taxon>
        <taxon>Vibrionales</taxon>
        <taxon>Vibrionaceae</taxon>
        <taxon>Vibrio</taxon>
    </lineage>
</organism>
<gene>
    <name evidence="1" type="primary">iscS</name>
    <name type="ordered locus">VS_0607</name>
</gene>
<protein>
    <recommendedName>
        <fullName evidence="1">Cysteine desulfurase IscS</fullName>
        <ecNumber evidence="1">2.8.1.7</ecNumber>
    </recommendedName>
</protein>
<sequence>MKLPIYFDYSATCPVDPRVAEKMVQCMTMDGNFGNPASRSHRYGWQAEESVDNAREQIADLLNADPREIVFTSGATESDNLAIKGAAHFYEKKGKHVITCKTEHKAVLDPCRQLEREGFEVTYLEPEANGIIDLDKLQAAMREDTVLVSIMHVNNEIGVIQDIGAIGELCRARKIIFHVDAAQSAGKIPLDVKEMKVDLISMSAHKAYGPKGIGALYVRRKPRIRLEAQMHGGGHERGFRSGTLATHQIVGMGEAFAIAKQDMQKDYDHALALRERLLKGVQDLEAVTVNGDLDQRVPHNLNVSFAFVEGESLLMSLKDLAVSSGSACTSASLEPSYVLRALGLNDELAHSSVRFSFGRFTTEEEIDYAIAQIRVAVNKLRDMSPLWDMYKEGIDLNTVEWAHH</sequence>
<feature type="chain" id="PRO_1000133123" description="Cysteine desulfurase IscS">
    <location>
        <begin position="1"/>
        <end position="404"/>
    </location>
</feature>
<feature type="active site" description="Cysteine persulfide intermediate" evidence="1">
    <location>
        <position position="328"/>
    </location>
</feature>
<feature type="binding site" evidence="1">
    <location>
        <begin position="75"/>
        <end position="76"/>
    </location>
    <ligand>
        <name>pyridoxal 5'-phosphate</name>
        <dbReference type="ChEBI" id="CHEBI:597326"/>
    </ligand>
</feature>
<feature type="binding site" evidence="1">
    <location>
        <position position="155"/>
    </location>
    <ligand>
        <name>pyridoxal 5'-phosphate</name>
        <dbReference type="ChEBI" id="CHEBI:597326"/>
    </ligand>
</feature>
<feature type="binding site" evidence="1">
    <location>
        <position position="183"/>
    </location>
    <ligand>
        <name>pyridoxal 5'-phosphate</name>
        <dbReference type="ChEBI" id="CHEBI:597326"/>
    </ligand>
</feature>
<feature type="binding site" evidence="1">
    <location>
        <begin position="203"/>
        <end position="205"/>
    </location>
    <ligand>
        <name>pyridoxal 5'-phosphate</name>
        <dbReference type="ChEBI" id="CHEBI:597326"/>
    </ligand>
</feature>
<feature type="binding site" evidence="1">
    <location>
        <position position="243"/>
    </location>
    <ligand>
        <name>pyridoxal 5'-phosphate</name>
        <dbReference type="ChEBI" id="CHEBI:597326"/>
    </ligand>
</feature>
<feature type="binding site" description="via persulfide group" evidence="1">
    <location>
        <position position="328"/>
    </location>
    <ligand>
        <name>[2Fe-2S] cluster</name>
        <dbReference type="ChEBI" id="CHEBI:190135"/>
        <note>ligand shared with IscU</note>
    </ligand>
</feature>
<feature type="modified residue" description="N6-(pyridoxal phosphate)lysine" evidence="1">
    <location>
        <position position="206"/>
    </location>
</feature>
<keyword id="KW-0001">2Fe-2S</keyword>
<keyword id="KW-0963">Cytoplasm</keyword>
<keyword id="KW-0408">Iron</keyword>
<keyword id="KW-0411">Iron-sulfur</keyword>
<keyword id="KW-0479">Metal-binding</keyword>
<keyword id="KW-0663">Pyridoxal phosphate</keyword>
<keyword id="KW-0808">Transferase</keyword>
<accession>B7VJS6</accession>
<proteinExistence type="inferred from homology"/>
<comment type="function">
    <text evidence="1">Master enzyme that delivers sulfur to a number of partners involved in Fe-S cluster assembly, tRNA modification or cofactor biosynthesis. Catalyzes the removal of elemental sulfur atoms from cysteine to produce alanine. Functions as a sulfur delivery protein for Fe-S cluster synthesis onto IscU, an Fe-S scaffold assembly protein, as well as other S acceptor proteins.</text>
</comment>
<comment type="catalytic activity">
    <reaction evidence="1">
        <text>(sulfur carrier)-H + L-cysteine = (sulfur carrier)-SH + L-alanine</text>
        <dbReference type="Rhea" id="RHEA:43892"/>
        <dbReference type="Rhea" id="RHEA-COMP:14737"/>
        <dbReference type="Rhea" id="RHEA-COMP:14739"/>
        <dbReference type="ChEBI" id="CHEBI:29917"/>
        <dbReference type="ChEBI" id="CHEBI:35235"/>
        <dbReference type="ChEBI" id="CHEBI:57972"/>
        <dbReference type="ChEBI" id="CHEBI:64428"/>
        <dbReference type="EC" id="2.8.1.7"/>
    </reaction>
</comment>
<comment type="cofactor">
    <cofactor evidence="1">
        <name>pyridoxal 5'-phosphate</name>
        <dbReference type="ChEBI" id="CHEBI:597326"/>
    </cofactor>
</comment>
<comment type="pathway">
    <text evidence="1">Cofactor biosynthesis; iron-sulfur cluster biosynthesis.</text>
</comment>
<comment type="subunit">
    <text evidence="1">Homodimer. Forms a heterotetramer with IscU, interacts with other sulfur acceptors.</text>
</comment>
<comment type="subcellular location">
    <subcellularLocation>
        <location evidence="1">Cytoplasm</location>
    </subcellularLocation>
</comment>
<comment type="similarity">
    <text evidence="1">Belongs to the class-V pyridoxal-phosphate-dependent aminotransferase family. NifS/IscS subfamily.</text>
</comment>
<reference key="1">
    <citation type="submission" date="2009-02" db="EMBL/GenBank/DDBJ databases">
        <title>Vibrio splendidus str. LGP32 complete genome.</title>
        <authorList>
            <person name="Mazel D."/>
            <person name="Le Roux F."/>
        </authorList>
    </citation>
    <scope>NUCLEOTIDE SEQUENCE [LARGE SCALE GENOMIC DNA]</scope>
    <source>
        <strain>LGP32</strain>
    </source>
</reference>
<evidence type="ECO:0000255" key="1">
    <source>
        <dbReference type="HAMAP-Rule" id="MF_00331"/>
    </source>
</evidence>
<dbReference type="EC" id="2.8.1.7" evidence="1"/>
<dbReference type="EMBL" id="FM954972">
    <property type="protein sequence ID" value="CAV17600.1"/>
    <property type="molecule type" value="Genomic_DNA"/>
</dbReference>
<dbReference type="SMR" id="B7VJS6"/>
<dbReference type="STRING" id="575788.VS_0607"/>
<dbReference type="KEGG" id="vsp:VS_0607"/>
<dbReference type="eggNOG" id="COG1104">
    <property type="taxonomic scope" value="Bacteria"/>
</dbReference>
<dbReference type="HOGENOM" id="CLU_003433_0_2_6"/>
<dbReference type="UniPathway" id="UPA00266"/>
<dbReference type="Proteomes" id="UP000009100">
    <property type="component" value="Chromosome 1"/>
</dbReference>
<dbReference type="GO" id="GO:1990221">
    <property type="term" value="C:L-cysteine desulfurase complex"/>
    <property type="evidence" value="ECO:0007669"/>
    <property type="project" value="UniProtKB-ARBA"/>
</dbReference>
<dbReference type="GO" id="GO:0051537">
    <property type="term" value="F:2 iron, 2 sulfur cluster binding"/>
    <property type="evidence" value="ECO:0007669"/>
    <property type="project" value="UniProtKB-UniRule"/>
</dbReference>
<dbReference type="GO" id="GO:0031071">
    <property type="term" value="F:cysteine desulfurase activity"/>
    <property type="evidence" value="ECO:0007669"/>
    <property type="project" value="UniProtKB-UniRule"/>
</dbReference>
<dbReference type="GO" id="GO:0046872">
    <property type="term" value="F:metal ion binding"/>
    <property type="evidence" value="ECO:0007669"/>
    <property type="project" value="UniProtKB-KW"/>
</dbReference>
<dbReference type="GO" id="GO:0030170">
    <property type="term" value="F:pyridoxal phosphate binding"/>
    <property type="evidence" value="ECO:0007669"/>
    <property type="project" value="UniProtKB-UniRule"/>
</dbReference>
<dbReference type="GO" id="GO:0044571">
    <property type="term" value="P:[2Fe-2S] cluster assembly"/>
    <property type="evidence" value="ECO:0007669"/>
    <property type="project" value="UniProtKB-UniRule"/>
</dbReference>
<dbReference type="FunFam" id="3.40.640.10:FF:000003">
    <property type="entry name" value="Cysteine desulfurase IscS"/>
    <property type="match status" value="1"/>
</dbReference>
<dbReference type="FunFam" id="3.90.1150.10:FF:000002">
    <property type="entry name" value="Cysteine desulfurase IscS"/>
    <property type="match status" value="1"/>
</dbReference>
<dbReference type="Gene3D" id="3.90.1150.10">
    <property type="entry name" value="Aspartate Aminotransferase, domain 1"/>
    <property type="match status" value="1"/>
</dbReference>
<dbReference type="Gene3D" id="3.40.640.10">
    <property type="entry name" value="Type I PLP-dependent aspartate aminotransferase-like (Major domain)"/>
    <property type="match status" value="1"/>
</dbReference>
<dbReference type="HAMAP" id="MF_00331">
    <property type="entry name" value="Cys_desulf_IscS"/>
    <property type="match status" value="1"/>
</dbReference>
<dbReference type="InterPro" id="IPR000192">
    <property type="entry name" value="Aminotrans_V_dom"/>
</dbReference>
<dbReference type="InterPro" id="IPR020578">
    <property type="entry name" value="Aminotrans_V_PyrdxlP_BS"/>
</dbReference>
<dbReference type="InterPro" id="IPR010240">
    <property type="entry name" value="Cys_deSase_IscS"/>
</dbReference>
<dbReference type="InterPro" id="IPR016454">
    <property type="entry name" value="Cysteine_dSase"/>
</dbReference>
<dbReference type="InterPro" id="IPR015424">
    <property type="entry name" value="PyrdxlP-dep_Trfase"/>
</dbReference>
<dbReference type="InterPro" id="IPR015421">
    <property type="entry name" value="PyrdxlP-dep_Trfase_major"/>
</dbReference>
<dbReference type="InterPro" id="IPR015422">
    <property type="entry name" value="PyrdxlP-dep_Trfase_small"/>
</dbReference>
<dbReference type="NCBIfam" id="TIGR02006">
    <property type="entry name" value="IscS"/>
    <property type="match status" value="1"/>
</dbReference>
<dbReference type="NCBIfam" id="NF002806">
    <property type="entry name" value="PRK02948.1"/>
    <property type="match status" value="1"/>
</dbReference>
<dbReference type="NCBIfam" id="NF010611">
    <property type="entry name" value="PRK14012.1"/>
    <property type="match status" value="1"/>
</dbReference>
<dbReference type="PANTHER" id="PTHR11601:SF34">
    <property type="entry name" value="CYSTEINE DESULFURASE"/>
    <property type="match status" value="1"/>
</dbReference>
<dbReference type="PANTHER" id="PTHR11601">
    <property type="entry name" value="CYSTEINE DESULFURYLASE FAMILY MEMBER"/>
    <property type="match status" value="1"/>
</dbReference>
<dbReference type="Pfam" id="PF00266">
    <property type="entry name" value="Aminotran_5"/>
    <property type="match status" value="1"/>
</dbReference>
<dbReference type="PIRSF" id="PIRSF005572">
    <property type="entry name" value="NifS"/>
    <property type="match status" value="1"/>
</dbReference>
<dbReference type="SUPFAM" id="SSF53383">
    <property type="entry name" value="PLP-dependent transferases"/>
    <property type="match status" value="1"/>
</dbReference>
<dbReference type="PROSITE" id="PS00595">
    <property type="entry name" value="AA_TRANSFER_CLASS_5"/>
    <property type="match status" value="1"/>
</dbReference>
<name>ISCS_VIBA3</name>